<organism>
    <name type="scientific">Brucella melitensis biotype 1 (strain ATCC 23456 / CCUG 17765 / NCTC 10094 / 16M)</name>
    <dbReference type="NCBI Taxonomy" id="224914"/>
    <lineage>
        <taxon>Bacteria</taxon>
        <taxon>Pseudomonadati</taxon>
        <taxon>Pseudomonadota</taxon>
        <taxon>Alphaproteobacteria</taxon>
        <taxon>Hyphomicrobiales</taxon>
        <taxon>Brucellaceae</taxon>
        <taxon>Brucella/Ochrobactrum group</taxon>
        <taxon>Brucella</taxon>
    </lineage>
</organism>
<protein>
    <recommendedName>
        <fullName evidence="1">UPF0178 protein BMEI0088</fullName>
    </recommendedName>
</protein>
<proteinExistence type="inferred from homology"/>
<gene>
    <name type="ordered locus">BMEI0088</name>
</gene>
<accession>Q8YJJ5</accession>
<dbReference type="EMBL" id="AE008917">
    <property type="protein sequence ID" value="AAL51270.1"/>
    <property type="molecule type" value="Genomic_DNA"/>
</dbReference>
<dbReference type="PIR" id="AC3263">
    <property type="entry name" value="AC3263"/>
</dbReference>
<dbReference type="RefSeq" id="WP_002965045.1">
    <property type="nucleotide sequence ID" value="NZ_GG703778.1"/>
</dbReference>
<dbReference type="KEGG" id="bme:BMEI0088"/>
<dbReference type="KEGG" id="bmel:DK63_1344"/>
<dbReference type="PATRIC" id="fig|224914.52.peg.1420"/>
<dbReference type="eggNOG" id="COG1671">
    <property type="taxonomic scope" value="Bacteria"/>
</dbReference>
<dbReference type="PhylomeDB" id="Q8YJJ5"/>
<dbReference type="Proteomes" id="UP000000419">
    <property type="component" value="Chromosome I"/>
</dbReference>
<dbReference type="HAMAP" id="MF_00489">
    <property type="entry name" value="UPF0178"/>
    <property type="match status" value="1"/>
</dbReference>
<dbReference type="InterPro" id="IPR003791">
    <property type="entry name" value="UPF0178"/>
</dbReference>
<dbReference type="NCBIfam" id="NF001095">
    <property type="entry name" value="PRK00124.1"/>
    <property type="match status" value="1"/>
</dbReference>
<dbReference type="PANTHER" id="PTHR35146">
    <property type="entry name" value="UPF0178 PROTEIN YAII"/>
    <property type="match status" value="1"/>
</dbReference>
<dbReference type="PANTHER" id="PTHR35146:SF1">
    <property type="entry name" value="UPF0178 PROTEIN YAII"/>
    <property type="match status" value="1"/>
</dbReference>
<dbReference type="Pfam" id="PF02639">
    <property type="entry name" value="DUF188"/>
    <property type="match status" value="1"/>
</dbReference>
<evidence type="ECO:0000255" key="1">
    <source>
        <dbReference type="HAMAP-Rule" id="MF_00489"/>
    </source>
</evidence>
<comment type="similarity">
    <text evidence="1">Belongs to the UPF0178 family.</text>
</comment>
<sequence>MENEPDTICILVDADACPVKAEIYRVAERHNLPVVIVANSFIAIPREAQRVERVVVSGNLDAADDWIAEHSRPGAVVVTADIPLASHALEKGASVIAPNGRIHTQSTIGNTLATRNLMDSLRSAGEVTGGPAPFAPKDRSAFLSALDLAIVRLKRAGFHAS</sequence>
<name>Y088_BRUME</name>
<reference key="1">
    <citation type="journal article" date="2002" name="Proc. Natl. Acad. Sci. U.S.A.">
        <title>The genome sequence of the facultative intracellular pathogen Brucella melitensis.</title>
        <authorList>
            <person name="DelVecchio V.G."/>
            <person name="Kapatral V."/>
            <person name="Redkar R.J."/>
            <person name="Patra G."/>
            <person name="Mujer C."/>
            <person name="Los T."/>
            <person name="Ivanova N."/>
            <person name="Anderson I."/>
            <person name="Bhattacharyya A."/>
            <person name="Lykidis A."/>
            <person name="Reznik G."/>
            <person name="Jablonski L."/>
            <person name="Larsen N."/>
            <person name="D'Souza M."/>
            <person name="Bernal A."/>
            <person name="Mazur M."/>
            <person name="Goltsman E."/>
            <person name="Selkov E."/>
            <person name="Elzer P.H."/>
            <person name="Hagius S."/>
            <person name="O'Callaghan D."/>
            <person name="Letesson J.-J."/>
            <person name="Haselkorn R."/>
            <person name="Kyrpides N.C."/>
            <person name="Overbeek R."/>
        </authorList>
    </citation>
    <scope>NUCLEOTIDE SEQUENCE [LARGE SCALE GENOMIC DNA]</scope>
    <source>
        <strain>ATCC 23456 / CCUG 17765 / NCTC 10094 / 16M</strain>
    </source>
</reference>
<feature type="chain" id="PRO_0000175969" description="UPF0178 protein BMEI0088">
    <location>
        <begin position="1"/>
        <end position="161"/>
    </location>
</feature>